<gene>
    <name evidence="1" type="primary">glmM</name>
    <name type="ordered locus">Cgl0583</name>
    <name type="ordered locus">cg0675</name>
</gene>
<sequence>MTRLFGTDGVRGLANEVLTAPLALKLGAAAAHVLTAEKRVDGRRPVAIVGRDPRVSGEMLAAALSAGMASQGVDVIRVGVIPTPAVAFLTDDYGADMGVMISASHNPMPDNGIKFFSAGGHKLPDHVEDEIERVMDSLPAEGPTGHGVGRVIEEATDAQDRYLEHLKEAVPTSLEGIKIVVDAANGAASVVAPTAYEAAGATVIAIHNKPDSYNINMDCGSTHIDQVQAAVLKHGADLGLAHDGDADRCLAVDKDGNLVDGDQIMALLAIAMKENGELRKNTLVGTVMSNLGLKIAMDEAGITLRTTKVGDRYVLEDLNAGGFSLGGEQSGHIVLPDHGTTGDGTLTGLSIMARMAETGKSLGELAQAMTVLPQVLINVPVSDKSTIVSHPSVVAAIAEAEAELGATGRVLLRASGTEELFRVMVEAGDKEQARRIAGRLAAVVAEV</sequence>
<keyword id="KW-0413">Isomerase</keyword>
<keyword id="KW-0460">Magnesium</keyword>
<keyword id="KW-0479">Metal-binding</keyword>
<keyword id="KW-0597">Phosphoprotein</keyword>
<keyword id="KW-1185">Reference proteome</keyword>
<protein>
    <recommendedName>
        <fullName evidence="1">Phosphoglucosamine mutase</fullName>
        <ecNumber evidence="1">5.4.2.10</ecNumber>
    </recommendedName>
</protein>
<reference key="1">
    <citation type="journal article" date="2003" name="Appl. Microbiol. Biotechnol.">
        <title>The Corynebacterium glutamicum genome: features and impacts on biotechnological processes.</title>
        <authorList>
            <person name="Ikeda M."/>
            <person name="Nakagawa S."/>
        </authorList>
    </citation>
    <scope>NUCLEOTIDE SEQUENCE [LARGE SCALE GENOMIC DNA]</scope>
    <source>
        <strain>ATCC 13032 / DSM 20300 / JCM 1318 / BCRC 11384 / CCUG 27702 / LMG 3730 / NBRC 12168 / NCIMB 10025 / NRRL B-2784 / 534</strain>
    </source>
</reference>
<reference key="2">
    <citation type="journal article" date="2003" name="J. Biotechnol.">
        <title>The complete Corynebacterium glutamicum ATCC 13032 genome sequence and its impact on the production of L-aspartate-derived amino acids and vitamins.</title>
        <authorList>
            <person name="Kalinowski J."/>
            <person name="Bathe B."/>
            <person name="Bartels D."/>
            <person name="Bischoff N."/>
            <person name="Bott M."/>
            <person name="Burkovski A."/>
            <person name="Dusch N."/>
            <person name="Eggeling L."/>
            <person name="Eikmanns B.J."/>
            <person name="Gaigalat L."/>
            <person name="Goesmann A."/>
            <person name="Hartmann M."/>
            <person name="Huthmacher K."/>
            <person name="Kraemer R."/>
            <person name="Linke B."/>
            <person name="McHardy A.C."/>
            <person name="Meyer F."/>
            <person name="Moeckel B."/>
            <person name="Pfefferle W."/>
            <person name="Puehler A."/>
            <person name="Rey D.A."/>
            <person name="Rueckert C."/>
            <person name="Rupp O."/>
            <person name="Sahm H."/>
            <person name="Wendisch V.F."/>
            <person name="Wiegraebe I."/>
            <person name="Tauch A."/>
        </authorList>
    </citation>
    <scope>NUCLEOTIDE SEQUENCE [LARGE SCALE GENOMIC DNA]</scope>
    <source>
        <strain>ATCC 13032 / DSM 20300 / JCM 1318 / BCRC 11384 / CCUG 27702 / LMG 3730 / NBRC 12168 / NCIMB 10025 / NRRL B-2784 / 534</strain>
    </source>
</reference>
<feature type="chain" id="PRO_0000147879" description="Phosphoglucosamine mutase">
    <location>
        <begin position="1"/>
        <end position="447"/>
    </location>
</feature>
<feature type="active site" description="Phosphoserine intermediate" evidence="1">
    <location>
        <position position="104"/>
    </location>
</feature>
<feature type="binding site" description="via phosphate group" evidence="1">
    <location>
        <position position="104"/>
    </location>
    <ligand>
        <name>Mg(2+)</name>
        <dbReference type="ChEBI" id="CHEBI:18420"/>
    </ligand>
</feature>
<feature type="binding site" evidence="1">
    <location>
        <position position="243"/>
    </location>
    <ligand>
        <name>Mg(2+)</name>
        <dbReference type="ChEBI" id="CHEBI:18420"/>
    </ligand>
</feature>
<feature type="binding site" evidence="1">
    <location>
        <position position="245"/>
    </location>
    <ligand>
        <name>Mg(2+)</name>
        <dbReference type="ChEBI" id="CHEBI:18420"/>
    </ligand>
</feature>
<feature type="binding site" evidence="1">
    <location>
        <position position="247"/>
    </location>
    <ligand>
        <name>Mg(2+)</name>
        <dbReference type="ChEBI" id="CHEBI:18420"/>
    </ligand>
</feature>
<feature type="modified residue" description="Phosphoserine" evidence="1">
    <location>
        <position position="104"/>
    </location>
</feature>
<dbReference type="EC" id="5.4.2.10" evidence="1"/>
<dbReference type="EMBL" id="BA000036">
    <property type="protein sequence ID" value="BAB97976.1"/>
    <property type="molecule type" value="Genomic_DNA"/>
</dbReference>
<dbReference type="EMBL" id="BX927149">
    <property type="protein sequence ID" value="CAF19288.1"/>
    <property type="molecule type" value="Genomic_DNA"/>
</dbReference>
<dbReference type="RefSeq" id="NP_599819.1">
    <property type="nucleotide sequence ID" value="NC_003450.3"/>
</dbReference>
<dbReference type="RefSeq" id="WP_011013744.1">
    <property type="nucleotide sequence ID" value="NC_006958.1"/>
</dbReference>
<dbReference type="SMR" id="Q8NST4"/>
<dbReference type="STRING" id="196627.cg0675"/>
<dbReference type="GeneID" id="1018587"/>
<dbReference type="KEGG" id="cgb:cg0675"/>
<dbReference type="KEGG" id="cgl:Cgl0583"/>
<dbReference type="PATRIC" id="fig|196627.13.peg.574"/>
<dbReference type="eggNOG" id="COG1109">
    <property type="taxonomic scope" value="Bacteria"/>
</dbReference>
<dbReference type="HOGENOM" id="CLU_016950_7_0_11"/>
<dbReference type="OrthoDB" id="9803322at2"/>
<dbReference type="BioCyc" id="CORYNE:G18NG-10145-MONOMER"/>
<dbReference type="Proteomes" id="UP000000582">
    <property type="component" value="Chromosome"/>
</dbReference>
<dbReference type="Proteomes" id="UP000001009">
    <property type="component" value="Chromosome"/>
</dbReference>
<dbReference type="GO" id="GO:0005829">
    <property type="term" value="C:cytosol"/>
    <property type="evidence" value="ECO:0007669"/>
    <property type="project" value="TreeGrafter"/>
</dbReference>
<dbReference type="GO" id="GO:0000287">
    <property type="term" value="F:magnesium ion binding"/>
    <property type="evidence" value="ECO:0007669"/>
    <property type="project" value="UniProtKB-UniRule"/>
</dbReference>
<dbReference type="GO" id="GO:0008966">
    <property type="term" value="F:phosphoglucosamine mutase activity"/>
    <property type="evidence" value="ECO:0007669"/>
    <property type="project" value="UniProtKB-UniRule"/>
</dbReference>
<dbReference type="GO" id="GO:0004615">
    <property type="term" value="F:phosphomannomutase activity"/>
    <property type="evidence" value="ECO:0007669"/>
    <property type="project" value="TreeGrafter"/>
</dbReference>
<dbReference type="GO" id="GO:0005975">
    <property type="term" value="P:carbohydrate metabolic process"/>
    <property type="evidence" value="ECO:0007669"/>
    <property type="project" value="InterPro"/>
</dbReference>
<dbReference type="GO" id="GO:0009252">
    <property type="term" value="P:peptidoglycan biosynthetic process"/>
    <property type="evidence" value="ECO:0007669"/>
    <property type="project" value="TreeGrafter"/>
</dbReference>
<dbReference type="GO" id="GO:0006048">
    <property type="term" value="P:UDP-N-acetylglucosamine biosynthetic process"/>
    <property type="evidence" value="ECO:0007669"/>
    <property type="project" value="TreeGrafter"/>
</dbReference>
<dbReference type="CDD" id="cd05802">
    <property type="entry name" value="GlmM"/>
    <property type="match status" value="1"/>
</dbReference>
<dbReference type="FunFam" id="3.30.310.50:FF:000001">
    <property type="entry name" value="Phosphoglucosamine mutase"/>
    <property type="match status" value="1"/>
</dbReference>
<dbReference type="FunFam" id="3.40.120.10:FF:000001">
    <property type="entry name" value="Phosphoglucosamine mutase"/>
    <property type="match status" value="1"/>
</dbReference>
<dbReference type="FunFam" id="3.40.120.10:FF:000002">
    <property type="entry name" value="Phosphoglucosamine mutase"/>
    <property type="match status" value="1"/>
</dbReference>
<dbReference type="Gene3D" id="3.40.120.10">
    <property type="entry name" value="Alpha-D-Glucose-1,6-Bisphosphate, subunit A, domain 3"/>
    <property type="match status" value="3"/>
</dbReference>
<dbReference type="Gene3D" id="3.30.310.50">
    <property type="entry name" value="Alpha-D-phosphohexomutase, C-terminal domain"/>
    <property type="match status" value="1"/>
</dbReference>
<dbReference type="HAMAP" id="MF_01554_B">
    <property type="entry name" value="GlmM_B"/>
    <property type="match status" value="1"/>
</dbReference>
<dbReference type="InterPro" id="IPR005844">
    <property type="entry name" value="A-D-PHexomutase_a/b/a-I"/>
</dbReference>
<dbReference type="InterPro" id="IPR016055">
    <property type="entry name" value="A-D-PHexomutase_a/b/a-I/II/III"/>
</dbReference>
<dbReference type="InterPro" id="IPR005845">
    <property type="entry name" value="A-D-PHexomutase_a/b/a-II"/>
</dbReference>
<dbReference type="InterPro" id="IPR005846">
    <property type="entry name" value="A-D-PHexomutase_a/b/a-III"/>
</dbReference>
<dbReference type="InterPro" id="IPR005843">
    <property type="entry name" value="A-D-PHexomutase_C"/>
</dbReference>
<dbReference type="InterPro" id="IPR036900">
    <property type="entry name" value="A-D-PHexomutase_C_sf"/>
</dbReference>
<dbReference type="InterPro" id="IPR016066">
    <property type="entry name" value="A-D-PHexomutase_CS"/>
</dbReference>
<dbReference type="InterPro" id="IPR005841">
    <property type="entry name" value="Alpha-D-phosphohexomutase_SF"/>
</dbReference>
<dbReference type="InterPro" id="IPR006352">
    <property type="entry name" value="GlmM_bact"/>
</dbReference>
<dbReference type="InterPro" id="IPR050060">
    <property type="entry name" value="Phosphoglucosamine_mutase"/>
</dbReference>
<dbReference type="NCBIfam" id="TIGR01455">
    <property type="entry name" value="glmM"/>
    <property type="match status" value="1"/>
</dbReference>
<dbReference type="NCBIfam" id="NF008139">
    <property type="entry name" value="PRK10887.1"/>
    <property type="match status" value="1"/>
</dbReference>
<dbReference type="PANTHER" id="PTHR42946:SF1">
    <property type="entry name" value="PHOSPHOGLUCOMUTASE (ALPHA-D-GLUCOSE-1,6-BISPHOSPHATE-DEPENDENT)"/>
    <property type="match status" value="1"/>
</dbReference>
<dbReference type="PANTHER" id="PTHR42946">
    <property type="entry name" value="PHOSPHOHEXOSE MUTASE"/>
    <property type="match status" value="1"/>
</dbReference>
<dbReference type="Pfam" id="PF02878">
    <property type="entry name" value="PGM_PMM_I"/>
    <property type="match status" value="1"/>
</dbReference>
<dbReference type="Pfam" id="PF02879">
    <property type="entry name" value="PGM_PMM_II"/>
    <property type="match status" value="1"/>
</dbReference>
<dbReference type="Pfam" id="PF02880">
    <property type="entry name" value="PGM_PMM_III"/>
    <property type="match status" value="1"/>
</dbReference>
<dbReference type="Pfam" id="PF00408">
    <property type="entry name" value="PGM_PMM_IV"/>
    <property type="match status" value="1"/>
</dbReference>
<dbReference type="PRINTS" id="PR00509">
    <property type="entry name" value="PGMPMM"/>
</dbReference>
<dbReference type="SUPFAM" id="SSF55957">
    <property type="entry name" value="Phosphoglucomutase, C-terminal domain"/>
    <property type="match status" value="1"/>
</dbReference>
<dbReference type="SUPFAM" id="SSF53738">
    <property type="entry name" value="Phosphoglucomutase, first 3 domains"/>
    <property type="match status" value="3"/>
</dbReference>
<dbReference type="PROSITE" id="PS00710">
    <property type="entry name" value="PGM_PMM"/>
    <property type="match status" value="1"/>
</dbReference>
<organism>
    <name type="scientific">Corynebacterium glutamicum (strain ATCC 13032 / DSM 20300 / JCM 1318 / BCRC 11384 / CCUG 27702 / LMG 3730 / NBRC 12168 / NCIMB 10025 / NRRL B-2784 / 534)</name>
    <dbReference type="NCBI Taxonomy" id="196627"/>
    <lineage>
        <taxon>Bacteria</taxon>
        <taxon>Bacillati</taxon>
        <taxon>Actinomycetota</taxon>
        <taxon>Actinomycetes</taxon>
        <taxon>Mycobacteriales</taxon>
        <taxon>Corynebacteriaceae</taxon>
        <taxon>Corynebacterium</taxon>
    </lineage>
</organism>
<accession>Q8NST4</accession>
<accession>Q6M7H9</accession>
<proteinExistence type="inferred from homology"/>
<evidence type="ECO:0000255" key="1">
    <source>
        <dbReference type="HAMAP-Rule" id="MF_01554"/>
    </source>
</evidence>
<comment type="function">
    <text evidence="1">Catalyzes the conversion of glucosamine-6-phosphate to glucosamine-1-phosphate.</text>
</comment>
<comment type="catalytic activity">
    <reaction evidence="1">
        <text>alpha-D-glucosamine 1-phosphate = D-glucosamine 6-phosphate</text>
        <dbReference type="Rhea" id="RHEA:23424"/>
        <dbReference type="ChEBI" id="CHEBI:58516"/>
        <dbReference type="ChEBI" id="CHEBI:58725"/>
        <dbReference type="EC" id="5.4.2.10"/>
    </reaction>
</comment>
<comment type="cofactor">
    <cofactor evidence="1">
        <name>Mg(2+)</name>
        <dbReference type="ChEBI" id="CHEBI:18420"/>
    </cofactor>
    <text evidence="1">Binds 1 Mg(2+) ion per subunit.</text>
</comment>
<comment type="PTM">
    <text evidence="1">Activated by phosphorylation.</text>
</comment>
<comment type="similarity">
    <text evidence="1">Belongs to the phosphohexose mutase family.</text>
</comment>
<name>GLMM_CORGL</name>